<reference key="1">
    <citation type="journal article" date="2009" name="PLoS Biol.">
        <title>Lineage-specific biology revealed by a finished genome assembly of the mouse.</title>
        <authorList>
            <person name="Church D.M."/>
            <person name="Goodstadt L."/>
            <person name="Hillier L.W."/>
            <person name="Zody M.C."/>
            <person name="Goldstein S."/>
            <person name="She X."/>
            <person name="Bult C.J."/>
            <person name="Agarwala R."/>
            <person name="Cherry J.L."/>
            <person name="DiCuccio M."/>
            <person name="Hlavina W."/>
            <person name="Kapustin Y."/>
            <person name="Meric P."/>
            <person name="Maglott D."/>
            <person name="Birtle Z."/>
            <person name="Marques A.C."/>
            <person name="Graves T."/>
            <person name="Zhou S."/>
            <person name="Teague B."/>
            <person name="Potamousis K."/>
            <person name="Churas C."/>
            <person name="Place M."/>
            <person name="Herschleb J."/>
            <person name="Runnheim R."/>
            <person name="Forrest D."/>
            <person name="Amos-Landgraf J."/>
            <person name="Schwartz D.C."/>
            <person name="Cheng Z."/>
            <person name="Lindblad-Toh K."/>
            <person name="Eichler E.E."/>
            <person name="Ponting C.P."/>
        </authorList>
    </citation>
    <scope>NUCLEOTIDE SEQUENCE [LARGE SCALE GENOMIC DNA]</scope>
    <source>
        <strain>C57BL/6J</strain>
    </source>
</reference>
<reference key="2">
    <citation type="journal article" date="2004" name="Genome Res.">
        <title>The status, quality, and expansion of the NIH full-length cDNA project: the Mammalian Gene Collection (MGC).</title>
        <authorList>
            <consortium name="The MGC Project Team"/>
        </authorList>
    </citation>
    <scope>NUCLEOTIDE SEQUENCE [LARGE SCALE MRNA] OF 883-1985 (ISOFORM 1)</scope>
    <source>
        <strain>FVB/N</strain>
        <tissue>Eye</tissue>
        <tissue>Mammary tumor</tissue>
    </source>
</reference>
<reference key="3">
    <citation type="journal article" date="2003" name="DNA Res.">
        <title>Prediction of the coding sequences of mouse homologues of KIAA gene: II. The complete nucleotide sequences of 400 mouse KIAA-homologous cDNAs identified by screening of terminal sequences of cDNA clones randomly sampled from size-fractionated libraries.</title>
        <authorList>
            <person name="Okazaki N."/>
            <person name="Kikuno R."/>
            <person name="Ohara R."/>
            <person name="Inamoto S."/>
            <person name="Aizawa H."/>
            <person name="Yuasa S."/>
            <person name="Nakajima D."/>
            <person name="Nagase T."/>
            <person name="Ohara O."/>
            <person name="Koga H."/>
        </authorList>
    </citation>
    <scope>NUCLEOTIDE SEQUENCE [LARGE SCALE MRNA] OF 1090-1985 (ISOFORM 2)</scope>
</reference>
<reference key="4">
    <citation type="journal article" date="2007" name="J. Biol. Chem.">
        <title>Identification and characterization of the human Set1B histone H3-Lys4 methyltransferase complex.</title>
        <authorList>
            <person name="Lee J.-H."/>
            <person name="Tate C.M."/>
            <person name="You J.-S."/>
            <person name="Skalnik D.G."/>
        </authorList>
    </citation>
    <scope>TISSUE SPECIFICITY</scope>
</reference>
<reference key="5">
    <citation type="journal article" date="2007" name="Proc. Natl. Acad. Sci. U.S.A.">
        <title>Large-scale phosphorylation analysis of mouse liver.</title>
        <authorList>
            <person name="Villen J."/>
            <person name="Beausoleil S.A."/>
            <person name="Gerber S.A."/>
            <person name="Gygi S.P."/>
        </authorList>
    </citation>
    <scope>IDENTIFICATION BY MASS SPECTROMETRY [LARGE SCALE ANALYSIS]</scope>
    <source>
        <tissue>Liver</tissue>
    </source>
</reference>
<reference key="6">
    <citation type="journal article" date="2010" name="Cell">
        <title>A tissue-specific atlas of mouse protein phosphorylation and expression.</title>
        <authorList>
            <person name="Huttlin E.L."/>
            <person name="Jedrychowski M.P."/>
            <person name="Elias J.E."/>
            <person name="Goswami T."/>
            <person name="Rad R."/>
            <person name="Beausoleil S.A."/>
            <person name="Villen J."/>
            <person name="Haas W."/>
            <person name="Sowa M.E."/>
            <person name="Gygi S.P."/>
        </authorList>
    </citation>
    <scope>PHOSPHORYLATION [LARGE SCALE ANALYSIS] AT SER-1283; SER-1301; SER-1678 AND SER-1682</scope>
    <scope>IDENTIFICATION BY MASS SPECTROMETRY [LARGE SCALE ANALYSIS]</scope>
    <source>
        <tissue>Brain</tissue>
        <tissue>Kidney</tissue>
        <tissue>Liver</tissue>
        <tissue>Lung</tissue>
        <tissue>Pancreas</tissue>
        <tissue>Spleen</tissue>
        <tissue>Testis</tissue>
    </source>
</reference>
<reference key="7">
    <citation type="journal article" date="2014" name="Development">
        <title>The H3K4 methyltransferase Setd1a is first required at the epiblast stage, whereas Setd1b becomes essential after gastrulation.</title>
        <authorList>
            <person name="Bledau A.S."/>
            <person name="Schmidt K."/>
            <person name="Neumann K."/>
            <person name="Hill U."/>
            <person name="Ciotta G."/>
            <person name="Gupta A."/>
            <person name="Torres D.C."/>
            <person name="Fu J."/>
            <person name="Kranz A."/>
            <person name="Stewart A.F."/>
            <person name="Anastassiadis K."/>
        </authorList>
    </citation>
    <scope>SUBCELLULAR LOCATION</scope>
    <scope>DEVELOPMENTAL STAGE</scope>
    <scope>DISRUPTION PHENOTYPE</scope>
</reference>
<reference key="8">
    <citation type="journal article" date="2018" name="Elife">
        <title>The H3K4 methyltransferase Setd1b is essential for hematopoietic stem and progenitor cell homeostasis in mice.</title>
        <authorList>
            <person name="Schmidt K."/>
            <person name="Zhang Q."/>
            <person name="Tasdogan A."/>
            <person name="Petzold A."/>
            <person name="Dahl A."/>
            <person name="Arneth B.M."/>
            <person name="Slany R."/>
            <person name="Fehling H.J."/>
            <person name="Kranz A."/>
            <person name="Stewart A.F."/>
            <person name="Anastassiadis K."/>
        </authorList>
    </citation>
    <scope>FUNCTION</scope>
</reference>
<keyword id="KW-0010">Activator</keyword>
<keyword id="KW-0025">Alternative splicing</keyword>
<keyword id="KW-0156">Chromatin regulator</keyword>
<keyword id="KW-0158">Chromosome</keyword>
<keyword id="KW-0963">Cytoplasm</keyword>
<keyword id="KW-0489">Methyltransferase</keyword>
<keyword id="KW-0539">Nucleus</keyword>
<keyword id="KW-0597">Phosphoprotein</keyword>
<keyword id="KW-1185">Reference proteome</keyword>
<keyword id="KW-0694">RNA-binding</keyword>
<keyword id="KW-0949">S-adenosyl-L-methionine</keyword>
<keyword id="KW-0804">Transcription</keyword>
<keyword id="KW-0805">Transcription regulation</keyword>
<keyword id="KW-0808">Transferase</keyword>
<accession>Q8CFT2</accession>
<accession>Q80TK9</accession>
<accession>Q8CFQ8</accession>
<accession>Q8CGD1</accession>
<sequence length="1985" mass="215352">MENSHPHHHHQQPPPQPGPSGERRNHHWRSYKLMIDPALKKGHHKLYRYDGQHFSLAMSSNRPVEIVEDPRVVGIWTKNKELELSVPKFKIDEFYVGPVPPKQVTFAKLNDNVRENFLRDMCKKYGEVEEVEILYNPKTKKHLGIAKVVFATVRGAKEAVQHLHSTSVMGNIIHVELDTKGETRMRFYELLVTGRYTPQTLPVGELDAISPIVSETLQLSDALKRLKDGSLSAGCGSGSSSVTPNSGGTPFSQDTAYSSCRLDTPNSYGQGTPITPRLGTPFSQDSSYSSRQPTPSYLFSQDPTATFKARRHESKFTDAYNRRHEHHYVHNSAVAGATAPFRGSSDLSFGTVGSSGTPFKAQSQDATTFAHTPPPAQTATASGFKSAFSPYQTPAPPFPPPPEEPTATAAFGSRDSGEFRRAPAPPPLPPAEPPAKEKPGTPPGPPPPDSNSMELGGRPTFGWSPEPCDSPGTPTLESSPAGPEKPHDSLDSRIEMLLKEQRTKLPFLREQDSDTEIQMEGSPISSSSSQLSPLSHFGTNSQPGFRGPSPPSSRPSSTGLEDISPTPLPDSDEDEDLGLGLGPRPPPEPGPPDPMGLLGQTAEVDLDLAGDRTPTSERMDEGQQSSGEDMEISDDEMPSAPITSADCPKPMVVTPGAGAVAAPNVLAPNLPLPPPPGFPPLPPPPPPPPPQPGFPMPPPLPPPPPPPPPAHPAVTVPPPPLPAPPGVPPPPILPPLPPFPPGLFPVMQVDMSHVLGGQWGGMPMSFQMQTQMLSRLMTGQGACPYPPFMAAAAAAASAGLQFVNLPPYRSPFSLSNSGPGRGQHWPPLPKFDPSVPPPGYIPRQEDPHKATVDGVLLVVLKELKAIMKRDLNRKMVEVVAFRAFDEWWDKKERMAKASLTPVKSGEHKDEDRPKPKDRIASCLLESWGKGEGLGYEGLGLGIGLRGAIRLPSFKVKRKEPPDTASSGDQKRLRPSTSVDEEDEESERERDRDIADAPCELTKRDPKSVGVRRRPGRPLELDSGGEEDEKESLSASSSSSASSSSGSSTTSPSSSASDKEEEDRESTEEEEEEEEEEAEEEEEEGPRSRISSPSSSSSSDKDDEDDNEADSDGQIDSDIDDQGAPLSEASEKDNGDSEEEETESITTSKAPAESSSSSSESSGSSEFESSSESESSSSSSEDEEEMTVPGVEEEEEEEEEEEKETAMAAATVVAMAEESMPPAGGQDFEQDRAEVPLGPRGPMRESLGTEEEVDIEAEDEVPEMQAPELEEPPLPMGARKLEGSPEPPEEPGPNTQGDMLLSPELPARETEEAQLPSPPEHGPESDLDMEPEPPPMLSLPLQPPLPPPRLLRPPSPPPEPETPEPPKPPVPLEPPPEDHPPRTPGLCGSLAKSQSTETVPATPGGEPPLSGSSSGLSLSSPQVPGSPFSYPSPSPGLSSGGLPRTPGRDFSFTPTFPEPSGPLLLPVCPLPTGRRDERTGPLASPVLLETGLPLPLPLPLPLPLALPVPVLRAQPRPPPQLPPLLPATLAPCPTPIKRKPGRPRRSPPSMLSLDGPLVRPPPGPALGRDLLLLPGQPPAPIFPSAHDPRAVTLDFRNTGIPAPPPPLPPQPPPPPPPPPVESTKLPFKELDNQWPSEAIPPGPRRDEVTEEYVDLAKVRGPWRRPPKKRHEDLVAPSASPEPSPPQPLFRPRSEFEEMTILYDIWNGGIDEEDIRFLCVTYERLLQQDNGMDWLNDTLWVYHPSTSLSSAKKKKREDGIREHVTGCARSEGFYTIDKKDKLRYLNSSRASTDEPPMDTQGMSIPAQPHASTRAGSERRSEQRRLLSSFTGSCDSDLLKFNQLKFRKKKLKFCKSHIHDWGLFAMEPIAADEMVIEYVGQNIRQVIADMREKRYEDEGIGSSYMFRVDHDTIIDATKCGNFARFINHSCNPNCYAKVITVESQKKIVIYSKQHINVNEEITYDYKFPIEDVKIPCLCGSENCRGTLN</sequence>
<comment type="function">
    <text evidence="2 9">Histone methyltransferase that catalyzes methyl group transfer from S-adenosyl-L-methionine to the epsilon-amino group of 'Lys-4' of histone H3 (H3K4) via a non-processive mechanism. Part of chromatin remodeling machinery, forms H3K4me1, H3K4me2 and H3K4me3 methylation marks at active chromatin sites where transcription and DNA repair take place (By similarity). Plays an essential role in regulating the transcriptional programming of multipotent hematopoietic progenitor cells and lymphoid lineage specification during hematopoiesis (PubMed:29916805).</text>
</comment>
<comment type="catalytic activity">
    <reaction evidence="2">
        <text>L-lysyl(4)-[histone H3] + S-adenosyl-L-methionine = N(6)-methyl-L-lysyl(4)-[histone H3] + S-adenosyl-L-homocysteine + H(+)</text>
        <dbReference type="Rhea" id="RHEA:60264"/>
        <dbReference type="Rhea" id="RHEA-COMP:15543"/>
        <dbReference type="Rhea" id="RHEA-COMP:15547"/>
        <dbReference type="ChEBI" id="CHEBI:15378"/>
        <dbReference type="ChEBI" id="CHEBI:29969"/>
        <dbReference type="ChEBI" id="CHEBI:57856"/>
        <dbReference type="ChEBI" id="CHEBI:59789"/>
        <dbReference type="ChEBI" id="CHEBI:61929"/>
        <dbReference type="EC" id="2.1.1.364"/>
    </reaction>
    <physiologicalReaction direction="left-to-right" evidence="2">
        <dbReference type="Rhea" id="RHEA:60265"/>
    </physiologicalReaction>
</comment>
<comment type="catalytic activity">
    <reaction evidence="2">
        <text>N(6)-methyl-L-lysyl(4)-[histone H3] + S-adenosyl-L-methionine = N(6),N(6)-dimethyl-L-lysyl(4)-[histone H3] + S-adenosyl-L-homocysteine + H(+)</text>
        <dbReference type="Rhea" id="RHEA:60268"/>
        <dbReference type="Rhea" id="RHEA-COMP:15540"/>
        <dbReference type="Rhea" id="RHEA-COMP:15543"/>
        <dbReference type="ChEBI" id="CHEBI:15378"/>
        <dbReference type="ChEBI" id="CHEBI:57856"/>
        <dbReference type="ChEBI" id="CHEBI:59789"/>
        <dbReference type="ChEBI" id="CHEBI:61929"/>
        <dbReference type="ChEBI" id="CHEBI:61976"/>
    </reaction>
    <physiologicalReaction direction="left-to-right" evidence="2">
        <dbReference type="Rhea" id="RHEA:60269"/>
    </physiologicalReaction>
</comment>
<comment type="catalytic activity">
    <reaction evidence="2">
        <text>N(6),N(6)-dimethyl-L-lysyl(4)-[histone H3] + S-adenosyl-L-methionine = N(6),N(6),N(6)-trimethyl-L-lysyl(4)-[histone H3] + S-adenosyl-L-homocysteine + H(+)</text>
        <dbReference type="Rhea" id="RHEA:60272"/>
        <dbReference type="Rhea" id="RHEA-COMP:15537"/>
        <dbReference type="Rhea" id="RHEA-COMP:15540"/>
        <dbReference type="ChEBI" id="CHEBI:15378"/>
        <dbReference type="ChEBI" id="CHEBI:57856"/>
        <dbReference type="ChEBI" id="CHEBI:59789"/>
        <dbReference type="ChEBI" id="CHEBI:61961"/>
        <dbReference type="ChEBI" id="CHEBI:61976"/>
    </reaction>
    <physiologicalReaction direction="left-to-right" evidence="2">
        <dbReference type="Rhea" id="RHEA:60273"/>
    </physiologicalReaction>
</comment>
<comment type="subunit">
    <text evidence="2">Component of the SET1B/COMPASS complex composed of the catalytic subunit SETD1B, WDR5, WDR82, RBBP5, ASH2L/ASH2, CXXC1/CFP1, HCFC1, DPY30 homotrimer and BOD1. Forms a core complex with the evolutionary conserved subcomplex WRAD composed of WDR5, RBBP5, ASH2L/ASH2 and DPY30 subunits; WRAD differentially stimulates the methyltransferase activity. Interacts with HCFC1 and ASH2L/ASH2. Interacts (via the RRM domain) with WDR82. Interacts (via the RRM domain) with hyperphosphorylated C-terminal domain (CTD) of RNA polymerase II large subunit (POLR2A) only in the presence of WDR82. Binds specifically to CTD heptad repeats phosphorylated on 'Ser-5' of each heptad. Interacts with RBM15. Interacts (via WIN motif) with WDR5.</text>
</comment>
<comment type="subcellular location">
    <subcellularLocation>
        <location evidence="8">Nucleus</location>
    </subcellularLocation>
    <subcellularLocation>
        <location evidence="2">Nucleus speckle</location>
    </subcellularLocation>
    <subcellularLocation>
        <location evidence="2">Chromosome</location>
    </subcellularLocation>
    <subcellularLocation>
        <location evidence="2">Cytoplasm</location>
    </subcellularLocation>
    <text evidence="2">Localizes to a largely non-overlapping set of euchromatic nuclear speckles with SETD1A, suggesting that SETD1A and SETD1B each bind to a unique set of target genes (By similarity). Predominantly nuclear (By similarity).</text>
</comment>
<comment type="alternative products">
    <event type="alternative splicing"/>
    <isoform>
        <id>Q8CFT2-1</id>
        <name>1</name>
        <sequence type="displayed"/>
    </isoform>
    <isoform>
        <id>Q8CFT2-2</id>
        <name>2</name>
        <sequence type="described" ref="VSP_030851"/>
    </isoform>
</comment>
<comment type="tissue specificity">
    <text evidence="7">Widely expressed.</text>
</comment>
<comment type="developmental stage">
    <text evidence="8">During preimplantation development expressed through all stages from oocyte to blastocyst. High expression is detected in oocyte that declines to a stable level from the 8-cell stage until 8.5 dpc. Expressed in the blastocyst in both the inner cell mass and the trophectoderm.</text>
</comment>
<comment type="disruption phenotype">
    <text evidence="8">Mutant embryos show growth retardation from 7.5 dpc and die before 11.5 dpc.</text>
</comment>
<comment type="similarity">
    <text evidence="5">Belongs to the class V-like SAM-binding methyltransferase superfamily.</text>
</comment>
<protein>
    <recommendedName>
        <fullName>Histone-lysine N-methyltransferase SETD1B</fullName>
        <ecNumber evidence="2">2.1.1.364</ecNumber>
    </recommendedName>
    <alternativeName>
        <fullName>SET domain-containing protein 1B</fullName>
    </alternativeName>
</protein>
<feature type="chain" id="PRO_0000316994" description="Histone-lysine N-methyltransferase SETD1B">
    <location>
        <begin position="1"/>
        <end position="1985"/>
    </location>
</feature>
<feature type="domain" description="RRM" evidence="4">
    <location>
        <begin position="92"/>
        <end position="180"/>
    </location>
</feature>
<feature type="domain" description="SET" evidence="5">
    <location>
        <begin position="1846"/>
        <end position="1963"/>
    </location>
</feature>
<feature type="domain" description="Post-SET" evidence="3">
    <location>
        <begin position="1969"/>
        <end position="1985"/>
    </location>
</feature>
<feature type="region of interest" description="Disordered" evidence="6">
    <location>
        <begin position="1"/>
        <end position="25"/>
    </location>
</feature>
<feature type="region of interest" description="Interaction with WDR82" evidence="2">
    <location>
        <begin position="67"/>
        <end position="97"/>
    </location>
</feature>
<feature type="region of interest" description="Disordered" evidence="6">
    <location>
        <begin position="234"/>
        <end position="304"/>
    </location>
</feature>
<feature type="region of interest" description="Disordered" evidence="6">
    <location>
        <begin position="353"/>
        <end position="710"/>
    </location>
</feature>
<feature type="region of interest" description="Disordered" evidence="6">
    <location>
        <begin position="955"/>
        <end position="1480"/>
    </location>
</feature>
<feature type="region of interest" description="Disordered" evidence="6">
    <location>
        <begin position="1519"/>
        <end position="1624"/>
    </location>
</feature>
<feature type="region of interest" description="Disordered" evidence="6">
    <location>
        <begin position="1658"/>
        <end position="1687"/>
    </location>
</feature>
<feature type="region of interest" description="Disordered" evidence="6">
    <location>
        <begin position="1786"/>
        <end position="1819"/>
    </location>
</feature>
<feature type="short sequence motif" description="WDR5 interaction motif (WIN)" evidence="2">
    <location>
        <begin position="1764"/>
        <end position="1769"/>
    </location>
</feature>
<feature type="short sequence motif" description="RxxxRR motif" evidence="1">
    <location>
        <begin position="1817"/>
        <end position="1822"/>
    </location>
</feature>
<feature type="compositionally biased region" description="Basic residues" evidence="6">
    <location>
        <begin position="1"/>
        <end position="11"/>
    </location>
</feature>
<feature type="compositionally biased region" description="Polar residues" evidence="6">
    <location>
        <begin position="242"/>
        <end position="258"/>
    </location>
</feature>
<feature type="compositionally biased region" description="Polar residues" evidence="6">
    <location>
        <begin position="264"/>
        <end position="273"/>
    </location>
</feature>
<feature type="compositionally biased region" description="Polar residues" evidence="6">
    <location>
        <begin position="281"/>
        <end position="304"/>
    </location>
</feature>
<feature type="compositionally biased region" description="Polar residues" evidence="6">
    <location>
        <begin position="353"/>
        <end position="365"/>
    </location>
</feature>
<feature type="compositionally biased region" description="Low complexity" evidence="6">
    <location>
        <begin position="366"/>
        <end position="381"/>
    </location>
</feature>
<feature type="compositionally biased region" description="Pro residues" evidence="6">
    <location>
        <begin position="393"/>
        <end position="404"/>
    </location>
</feature>
<feature type="compositionally biased region" description="Pro residues" evidence="6">
    <location>
        <begin position="423"/>
        <end position="433"/>
    </location>
</feature>
<feature type="compositionally biased region" description="Pro residues" evidence="6">
    <location>
        <begin position="440"/>
        <end position="449"/>
    </location>
</feature>
<feature type="compositionally biased region" description="Basic and acidic residues" evidence="6">
    <location>
        <begin position="484"/>
        <end position="512"/>
    </location>
</feature>
<feature type="compositionally biased region" description="Low complexity" evidence="6">
    <location>
        <begin position="522"/>
        <end position="535"/>
    </location>
</feature>
<feature type="compositionally biased region" description="Pro residues" evidence="6">
    <location>
        <begin position="583"/>
        <end position="594"/>
    </location>
</feature>
<feature type="compositionally biased region" description="Acidic residues" evidence="6">
    <location>
        <begin position="628"/>
        <end position="637"/>
    </location>
</feature>
<feature type="compositionally biased region" description="Low complexity" evidence="6">
    <location>
        <begin position="650"/>
        <end position="669"/>
    </location>
</feature>
<feature type="compositionally biased region" description="Pro residues" evidence="6">
    <location>
        <begin position="670"/>
        <end position="710"/>
    </location>
</feature>
<feature type="compositionally biased region" description="Basic and acidic residues" evidence="6">
    <location>
        <begin position="986"/>
        <end position="1006"/>
    </location>
</feature>
<feature type="compositionally biased region" description="Low complexity" evidence="6">
    <location>
        <begin position="1032"/>
        <end position="1055"/>
    </location>
</feature>
<feature type="compositionally biased region" description="Acidic residues" evidence="6">
    <location>
        <begin position="1058"/>
        <end position="1083"/>
    </location>
</feature>
<feature type="compositionally biased region" description="Low complexity" evidence="6">
    <location>
        <begin position="1087"/>
        <end position="1097"/>
    </location>
</feature>
<feature type="compositionally biased region" description="Acidic residues" evidence="6">
    <location>
        <begin position="1100"/>
        <end position="1120"/>
    </location>
</feature>
<feature type="compositionally biased region" description="Low complexity" evidence="6">
    <location>
        <begin position="1143"/>
        <end position="1178"/>
    </location>
</feature>
<feature type="compositionally biased region" description="Acidic residues" evidence="6">
    <location>
        <begin position="1179"/>
        <end position="1202"/>
    </location>
</feature>
<feature type="compositionally biased region" description="Low complexity" evidence="6">
    <location>
        <begin position="1205"/>
        <end position="1217"/>
    </location>
</feature>
<feature type="compositionally biased region" description="Acidic residues" evidence="6">
    <location>
        <begin position="1247"/>
        <end position="1261"/>
    </location>
</feature>
<feature type="compositionally biased region" description="Pro residues" evidence="6">
    <location>
        <begin position="1331"/>
        <end position="1373"/>
    </location>
</feature>
<feature type="compositionally biased region" description="Low complexity" evidence="6">
    <location>
        <begin position="1402"/>
        <end position="1442"/>
    </location>
</feature>
<feature type="compositionally biased region" description="Basic residues" evidence="6">
    <location>
        <begin position="1535"/>
        <end position="1544"/>
    </location>
</feature>
<feature type="compositionally biased region" description="Pro residues" evidence="6">
    <location>
        <begin position="1600"/>
        <end position="1619"/>
    </location>
</feature>
<feature type="compositionally biased region" description="Pro residues" evidence="6">
    <location>
        <begin position="1678"/>
        <end position="1687"/>
    </location>
</feature>
<feature type="binding site" evidence="5">
    <location>
        <position position="1962"/>
    </location>
    <ligand>
        <name>S-adenosyl-L-methionine</name>
        <dbReference type="ChEBI" id="CHEBI:59789"/>
    </ligand>
</feature>
<feature type="modified residue" description="Phosphoserine" evidence="2">
    <location>
        <position position="977"/>
    </location>
</feature>
<feature type="modified residue" description="Phosphoserine" evidence="2">
    <location>
        <position position="985"/>
    </location>
</feature>
<feature type="modified residue" description="Phosphoserine" evidence="2">
    <location>
        <position position="1022"/>
    </location>
</feature>
<feature type="modified residue" description="Phosphoserine" evidence="12">
    <location>
        <position position="1283"/>
    </location>
</feature>
<feature type="modified residue" description="Phosphoserine" evidence="12">
    <location>
        <position position="1301"/>
    </location>
</feature>
<feature type="modified residue" description="Phosphoserine" evidence="2">
    <location>
        <position position="1354"/>
    </location>
</feature>
<feature type="modified residue" description="Phosphoserine" evidence="12">
    <location>
        <position position="1678"/>
    </location>
</feature>
<feature type="modified residue" description="Phosphoserine" evidence="12">
    <location>
        <position position="1682"/>
    </location>
</feature>
<feature type="splice variant" id="VSP_030851" description="In isoform 2." evidence="10">
    <location>
        <begin position="1139"/>
        <end position="1179"/>
    </location>
</feature>
<feature type="sequence conflict" description="In Ref. 3; BAC65717." evidence="11" ref="3">
    <original>A</original>
    <variation>V</variation>
    <location>
        <position position="1222"/>
    </location>
</feature>
<feature type="sequence conflict" description="In Ref. 3; BAC65717." evidence="11" ref="3">
    <original>S</original>
    <variation>G</variation>
    <location>
        <position position="1411"/>
    </location>
</feature>
<name>SET1B_MOUSE</name>
<dbReference type="EC" id="2.1.1.364" evidence="2"/>
<dbReference type="EMBL" id="AC158114">
    <property type="status" value="NOT_ANNOTATED_CDS"/>
    <property type="molecule type" value="Genomic_DNA"/>
</dbReference>
<dbReference type="EMBL" id="BC038367">
    <property type="protein sequence ID" value="AAH38367.2"/>
    <property type="molecule type" value="mRNA"/>
</dbReference>
<dbReference type="EMBL" id="BC040775">
    <property type="protein sequence ID" value="AAH40775.1"/>
    <property type="molecule type" value="mRNA"/>
</dbReference>
<dbReference type="EMBL" id="BC041681">
    <property type="protein sequence ID" value="AAH41681.1"/>
    <property type="molecule type" value="mRNA"/>
</dbReference>
<dbReference type="EMBL" id="AK122435">
    <property type="protein sequence ID" value="BAC65717.1"/>
    <property type="molecule type" value="mRNA"/>
</dbReference>
<dbReference type="CCDS" id="CCDS59684.1">
    <molecule id="Q8CFT2-1"/>
</dbReference>
<dbReference type="RefSeq" id="NP_001035488.2">
    <molecule id="Q8CFT2-1"/>
    <property type="nucleotide sequence ID" value="NM_001040398.2"/>
</dbReference>
<dbReference type="SMR" id="Q8CFT2"/>
<dbReference type="BioGRID" id="228940">
    <property type="interactions" value="4"/>
</dbReference>
<dbReference type="FunCoup" id="Q8CFT2">
    <property type="interactions" value="3094"/>
</dbReference>
<dbReference type="IntAct" id="Q8CFT2">
    <property type="interactions" value="1"/>
</dbReference>
<dbReference type="MINT" id="Q8CFT2"/>
<dbReference type="STRING" id="10090.ENSMUSP00000133933"/>
<dbReference type="GlyGen" id="Q8CFT2">
    <property type="glycosylation" value="7 sites, 1 O-linked glycan (1 site)"/>
</dbReference>
<dbReference type="iPTMnet" id="Q8CFT2"/>
<dbReference type="PhosphoSitePlus" id="Q8CFT2"/>
<dbReference type="jPOST" id="Q8CFT2"/>
<dbReference type="PaxDb" id="10090-ENSMUSP00000133933"/>
<dbReference type="PeptideAtlas" id="Q8CFT2"/>
<dbReference type="ProteomicsDB" id="261160">
    <molecule id="Q8CFT2-1"/>
</dbReference>
<dbReference type="ProteomicsDB" id="261161">
    <molecule id="Q8CFT2-2"/>
</dbReference>
<dbReference type="Pumba" id="Q8CFT2"/>
<dbReference type="Antibodypedia" id="9774">
    <property type="antibodies" value="116 antibodies from 26 providers"/>
</dbReference>
<dbReference type="Ensembl" id="ENSMUST00000056053.9">
    <molecule id="Q8CFT2-1"/>
    <property type="protein sequence ID" value="ENSMUSP00000134686.2"/>
    <property type="gene ID" value="ENSMUSG00000038384.17"/>
</dbReference>
<dbReference type="Ensembl" id="ENSMUST00000163030.9">
    <molecule id="Q8CFT2-1"/>
    <property type="protein sequence ID" value="ENSMUSP00000133933.2"/>
    <property type="gene ID" value="ENSMUSG00000038384.17"/>
</dbReference>
<dbReference type="Ensembl" id="ENSMUST00000174836.8">
    <molecule id="Q8CFT2-2"/>
    <property type="protein sequence ID" value="ENSMUSP00000134461.2"/>
    <property type="gene ID" value="ENSMUSG00000038384.17"/>
</dbReference>
<dbReference type="GeneID" id="208043"/>
<dbReference type="KEGG" id="mmu:208043"/>
<dbReference type="UCSC" id="uc008zng.2">
    <molecule id="Q8CFT2-1"/>
    <property type="organism name" value="mouse"/>
</dbReference>
<dbReference type="AGR" id="MGI:2652820"/>
<dbReference type="CTD" id="23067"/>
<dbReference type="MGI" id="MGI:2652820">
    <property type="gene designation" value="Setd1b"/>
</dbReference>
<dbReference type="VEuPathDB" id="HostDB:ENSMUSG00000038384"/>
<dbReference type="eggNOG" id="KOG1080">
    <property type="taxonomic scope" value="Eukaryota"/>
</dbReference>
<dbReference type="GeneTree" id="ENSGT00940000154575"/>
<dbReference type="HOGENOM" id="CLU_001226_0_0_1"/>
<dbReference type="InParanoid" id="Q8CFT2"/>
<dbReference type="OMA" id="LPCMHGD"/>
<dbReference type="PhylomeDB" id="Q8CFT2"/>
<dbReference type="TreeFam" id="TF106436"/>
<dbReference type="Reactome" id="R-MMU-3214841">
    <property type="pathway name" value="PKMTs methylate histone lysines"/>
</dbReference>
<dbReference type="Reactome" id="R-MMU-8936459">
    <property type="pathway name" value="RUNX1 regulates genes involved in megakaryocyte differentiation and platelet function"/>
</dbReference>
<dbReference type="Reactome" id="R-MMU-9772755">
    <property type="pathway name" value="Formation of WDR5-containing histone-modifying complexes"/>
</dbReference>
<dbReference type="BioGRID-ORCS" id="208043">
    <property type="hits" value="10 hits in 80 CRISPR screens"/>
</dbReference>
<dbReference type="ChiTaRS" id="Setd1b">
    <property type="organism name" value="mouse"/>
</dbReference>
<dbReference type="PRO" id="PR:Q8CFT2"/>
<dbReference type="Proteomes" id="UP000000589">
    <property type="component" value="Chromosome 5"/>
</dbReference>
<dbReference type="RNAct" id="Q8CFT2">
    <property type="molecule type" value="protein"/>
</dbReference>
<dbReference type="Bgee" id="ENSMUSG00000038384">
    <property type="expression patterns" value="Expressed in humerus cartilage element and 229 other cell types or tissues"/>
</dbReference>
<dbReference type="ExpressionAtlas" id="Q8CFT2">
    <property type="expression patterns" value="baseline and differential"/>
</dbReference>
<dbReference type="GO" id="GO:0005694">
    <property type="term" value="C:chromosome"/>
    <property type="evidence" value="ECO:0007669"/>
    <property type="project" value="UniProtKB-SubCell"/>
</dbReference>
<dbReference type="GO" id="GO:0005737">
    <property type="term" value="C:cytoplasm"/>
    <property type="evidence" value="ECO:0000250"/>
    <property type="project" value="UniProtKB"/>
</dbReference>
<dbReference type="GO" id="GO:0016607">
    <property type="term" value="C:nuclear speck"/>
    <property type="evidence" value="ECO:0007669"/>
    <property type="project" value="UniProtKB-SubCell"/>
</dbReference>
<dbReference type="GO" id="GO:0005634">
    <property type="term" value="C:nucleus"/>
    <property type="evidence" value="ECO:0000314"/>
    <property type="project" value="MGI"/>
</dbReference>
<dbReference type="GO" id="GO:0048188">
    <property type="term" value="C:Set1C/COMPASS complex"/>
    <property type="evidence" value="ECO:0000250"/>
    <property type="project" value="UniProtKB"/>
</dbReference>
<dbReference type="GO" id="GO:0140945">
    <property type="term" value="F:histone H3K4 monomethyltransferase activity"/>
    <property type="evidence" value="ECO:0007669"/>
    <property type="project" value="RHEA"/>
</dbReference>
<dbReference type="GO" id="GO:0140999">
    <property type="term" value="F:histone H3K4 trimethyltransferase activity"/>
    <property type="evidence" value="ECO:0007669"/>
    <property type="project" value="UniProtKB-EC"/>
</dbReference>
<dbReference type="GO" id="GO:0003723">
    <property type="term" value="F:RNA binding"/>
    <property type="evidence" value="ECO:0007669"/>
    <property type="project" value="UniProtKB-KW"/>
</dbReference>
<dbReference type="GO" id="GO:0032259">
    <property type="term" value="P:methylation"/>
    <property type="evidence" value="ECO:0007669"/>
    <property type="project" value="UniProtKB-KW"/>
</dbReference>
<dbReference type="CDD" id="cd12549">
    <property type="entry name" value="RRM_Set1B"/>
    <property type="match status" value="1"/>
</dbReference>
<dbReference type="CDD" id="cd19169">
    <property type="entry name" value="SET_SETD1"/>
    <property type="match status" value="1"/>
</dbReference>
<dbReference type="FunFam" id="2.170.270.10:FF:000010">
    <property type="entry name" value="Histone-lysine N-methyltransferase"/>
    <property type="match status" value="1"/>
</dbReference>
<dbReference type="FunFam" id="3.30.70.330:FF:000178">
    <property type="entry name" value="Histone-lysine N-methyltransferase"/>
    <property type="match status" value="1"/>
</dbReference>
<dbReference type="Gene3D" id="3.30.70.330">
    <property type="match status" value="1"/>
</dbReference>
<dbReference type="Gene3D" id="2.170.270.10">
    <property type="entry name" value="SET domain"/>
    <property type="match status" value="1"/>
</dbReference>
<dbReference type="InterPro" id="IPR024657">
    <property type="entry name" value="COMPASS_Set1_N-SET"/>
</dbReference>
<dbReference type="InterPro" id="IPR012677">
    <property type="entry name" value="Nucleotide-bd_a/b_plait_sf"/>
</dbReference>
<dbReference type="InterPro" id="IPR003616">
    <property type="entry name" value="Post-SET_dom"/>
</dbReference>
<dbReference type="InterPro" id="IPR035979">
    <property type="entry name" value="RBD_domain_sf"/>
</dbReference>
<dbReference type="InterPro" id="IPR000504">
    <property type="entry name" value="RRM_dom"/>
</dbReference>
<dbReference type="InterPro" id="IPR044570">
    <property type="entry name" value="Set1-like"/>
</dbReference>
<dbReference type="InterPro" id="IPR034468">
    <property type="entry name" value="Set1B_RRM"/>
</dbReference>
<dbReference type="InterPro" id="IPR001214">
    <property type="entry name" value="SET_dom"/>
</dbReference>
<dbReference type="InterPro" id="IPR046341">
    <property type="entry name" value="SET_dom_sf"/>
</dbReference>
<dbReference type="InterPro" id="IPR037841">
    <property type="entry name" value="SET_SETD1A/B"/>
</dbReference>
<dbReference type="PANTHER" id="PTHR45814">
    <property type="entry name" value="HISTONE-LYSINE N-METHYLTRANSFERASE SETD1"/>
    <property type="match status" value="1"/>
</dbReference>
<dbReference type="PANTHER" id="PTHR45814:SF1">
    <property type="entry name" value="HISTONE-LYSINE N-METHYLTRANSFERASE SETD1B"/>
    <property type="match status" value="1"/>
</dbReference>
<dbReference type="Pfam" id="PF11764">
    <property type="entry name" value="N-SET"/>
    <property type="match status" value="1"/>
</dbReference>
<dbReference type="Pfam" id="PF00076">
    <property type="entry name" value="RRM_1"/>
    <property type="match status" value="1"/>
</dbReference>
<dbReference type="Pfam" id="PF00856">
    <property type="entry name" value="SET"/>
    <property type="match status" value="1"/>
</dbReference>
<dbReference type="SMART" id="SM01291">
    <property type="entry name" value="N-SET"/>
    <property type="match status" value="1"/>
</dbReference>
<dbReference type="SMART" id="SM00508">
    <property type="entry name" value="PostSET"/>
    <property type="match status" value="1"/>
</dbReference>
<dbReference type="SMART" id="SM00360">
    <property type="entry name" value="RRM"/>
    <property type="match status" value="1"/>
</dbReference>
<dbReference type="SMART" id="SM00317">
    <property type="entry name" value="SET"/>
    <property type="match status" value="1"/>
</dbReference>
<dbReference type="SUPFAM" id="SSF54928">
    <property type="entry name" value="RNA-binding domain, RBD"/>
    <property type="match status" value="1"/>
</dbReference>
<dbReference type="SUPFAM" id="SSF82199">
    <property type="entry name" value="SET domain"/>
    <property type="match status" value="1"/>
</dbReference>
<dbReference type="PROSITE" id="PS50868">
    <property type="entry name" value="POST_SET"/>
    <property type="match status" value="1"/>
</dbReference>
<dbReference type="PROSITE" id="PS50102">
    <property type="entry name" value="RRM"/>
    <property type="match status" value="1"/>
</dbReference>
<dbReference type="PROSITE" id="PS50280">
    <property type="entry name" value="SET"/>
    <property type="match status" value="1"/>
</dbReference>
<organism>
    <name type="scientific">Mus musculus</name>
    <name type="common">Mouse</name>
    <dbReference type="NCBI Taxonomy" id="10090"/>
    <lineage>
        <taxon>Eukaryota</taxon>
        <taxon>Metazoa</taxon>
        <taxon>Chordata</taxon>
        <taxon>Craniata</taxon>
        <taxon>Vertebrata</taxon>
        <taxon>Euteleostomi</taxon>
        <taxon>Mammalia</taxon>
        <taxon>Eutheria</taxon>
        <taxon>Euarchontoglires</taxon>
        <taxon>Glires</taxon>
        <taxon>Rodentia</taxon>
        <taxon>Myomorpha</taxon>
        <taxon>Muroidea</taxon>
        <taxon>Muridae</taxon>
        <taxon>Murinae</taxon>
        <taxon>Mus</taxon>
        <taxon>Mus</taxon>
    </lineage>
</organism>
<gene>
    <name type="primary">Setd1b</name>
    <name type="synonym">Kiaa1076</name>
    <name type="synonym">Set1b</name>
</gene>
<proteinExistence type="evidence at protein level"/>
<evidence type="ECO:0000250" key="1">
    <source>
        <dbReference type="UniProtKB" id="P38827"/>
    </source>
</evidence>
<evidence type="ECO:0000250" key="2">
    <source>
        <dbReference type="UniProtKB" id="Q9UPS6"/>
    </source>
</evidence>
<evidence type="ECO:0000255" key="3">
    <source>
        <dbReference type="PROSITE-ProRule" id="PRU00155"/>
    </source>
</evidence>
<evidence type="ECO:0000255" key="4">
    <source>
        <dbReference type="PROSITE-ProRule" id="PRU00176"/>
    </source>
</evidence>
<evidence type="ECO:0000255" key="5">
    <source>
        <dbReference type="PROSITE-ProRule" id="PRU00190"/>
    </source>
</evidence>
<evidence type="ECO:0000256" key="6">
    <source>
        <dbReference type="SAM" id="MobiDB-lite"/>
    </source>
</evidence>
<evidence type="ECO:0000269" key="7">
    <source>
    </source>
</evidence>
<evidence type="ECO:0000269" key="8">
    <source>
    </source>
</evidence>
<evidence type="ECO:0000269" key="9">
    <source>
    </source>
</evidence>
<evidence type="ECO:0000303" key="10">
    <source>
    </source>
</evidence>
<evidence type="ECO:0000305" key="11"/>
<evidence type="ECO:0007744" key="12">
    <source>
    </source>
</evidence>